<feature type="chain" id="PRO_0000264758" description="Acetylglutamate kinase">
    <location>
        <begin position="1"/>
        <end position="258"/>
    </location>
</feature>
<feature type="binding site" evidence="1">
    <location>
        <begin position="44"/>
        <end position="45"/>
    </location>
    <ligand>
        <name>substrate</name>
    </ligand>
</feature>
<feature type="binding site" evidence="1">
    <location>
        <position position="66"/>
    </location>
    <ligand>
        <name>substrate</name>
    </ligand>
</feature>
<feature type="binding site" evidence="1">
    <location>
        <position position="158"/>
    </location>
    <ligand>
        <name>substrate</name>
    </ligand>
</feature>
<feature type="binding site" evidence="1">
    <location>
        <begin position="181"/>
        <end position="186"/>
    </location>
    <ligand>
        <name>ATP</name>
        <dbReference type="ChEBI" id="CHEBI:30616"/>
    </ligand>
</feature>
<feature type="binding site" evidence="1">
    <location>
        <begin position="209"/>
        <end position="211"/>
    </location>
    <ligand>
        <name>ATP</name>
        <dbReference type="ChEBI" id="CHEBI:30616"/>
    </ligand>
</feature>
<feature type="site" description="Transition state stabilizer" evidence="1">
    <location>
        <position position="8"/>
    </location>
</feature>
<feature type="site" description="Transition state stabilizer" evidence="1">
    <location>
        <position position="217"/>
    </location>
</feature>
<protein>
    <recommendedName>
        <fullName evidence="1">Acetylglutamate kinase</fullName>
        <ecNumber evidence="1">2.7.2.8</ecNumber>
    </recommendedName>
    <alternativeName>
        <fullName evidence="1">N-acetyl-L-glutamate 5-phosphotransferase</fullName>
    </alternativeName>
    <alternativeName>
        <fullName evidence="1">NAG kinase</fullName>
        <shortName evidence="1">NAGK</shortName>
    </alternativeName>
</protein>
<accession>Q31U29</accession>
<dbReference type="EC" id="2.7.2.8" evidence="1"/>
<dbReference type="EMBL" id="CP000036">
    <property type="protein sequence ID" value="ABB68429.1"/>
    <property type="molecule type" value="Genomic_DNA"/>
</dbReference>
<dbReference type="RefSeq" id="WP_001302318.1">
    <property type="nucleotide sequence ID" value="NC_007613.1"/>
</dbReference>
<dbReference type="SMR" id="Q31U29"/>
<dbReference type="GeneID" id="75203211"/>
<dbReference type="KEGG" id="sbo:SBO_3978"/>
<dbReference type="HOGENOM" id="CLU_053680_1_1_6"/>
<dbReference type="UniPathway" id="UPA00068">
    <property type="reaction ID" value="UER00107"/>
</dbReference>
<dbReference type="Proteomes" id="UP000007067">
    <property type="component" value="Chromosome"/>
</dbReference>
<dbReference type="GO" id="GO:0005737">
    <property type="term" value="C:cytoplasm"/>
    <property type="evidence" value="ECO:0007669"/>
    <property type="project" value="UniProtKB-SubCell"/>
</dbReference>
<dbReference type="GO" id="GO:0003991">
    <property type="term" value="F:acetylglutamate kinase activity"/>
    <property type="evidence" value="ECO:0007669"/>
    <property type="project" value="UniProtKB-UniRule"/>
</dbReference>
<dbReference type="GO" id="GO:0005524">
    <property type="term" value="F:ATP binding"/>
    <property type="evidence" value="ECO:0007669"/>
    <property type="project" value="UniProtKB-UniRule"/>
</dbReference>
<dbReference type="GO" id="GO:0042450">
    <property type="term" value="P:arginine biosynthetic process via ornithine"/>
    <property type="evidence" value="ECO:0007669"/>
    <property type="project" value="UniProtKB-UniRule"/>
</dbReference>
<dbReference type="GO" id="GO:0006526">
    <property type="term" value="P:L-arginine biosynthetic process"/>
    <property type="evidence" value="ECO:0007669"/>
    <property type="project" value="UniProtKB-UniPathway"/>
</dbReference>
<dbReference type="CDD" id="cd04249">
    <property type="entry name" value="AAK_NAGK-NC"/>
    <property type="match status" value="1"/>
</dbReference>
<dbReference type="FunFam" id="3.40.1160.10:FF:000008">
    <property type="entry name" value="Acetylglutamate kinase"/>
    <property type="match status" value="1"/>
</dbReference>
<dbReference type="Gene3D" id="3.40.1160.10">
    <property type="entry name" value="Acetylglutamate kinase-like"/>
    <property type="match status" value="1"/>
</dbReference>
<dbReference type="HAMAP" id="MF_00082">
    <property type="entry name" value="ArgB"/>
    <property type="match status" value="1"/>
</dbReference>
<dbReference type="InterPro" id="IPR036393">
    <property type="entry name" value="AceGlu_kinase-like_sf"/>
</dbReference>
<dbReference type="InterPro" id="IPR004662">
    <property type="entry name" value="AcgluKinase_fam"/>
</dbReference>
<dbReference type="InterPro" id="IPR037528">
    <property type="entry name" value="ArgB"/>
</dbReference>
<dbReference type="InterPro" id="IPR001048">
    <property type="entry name" value="Asp/Glu/Uridylate_kinase"/>
</dbReference>
<dbReference type="InterPro" id="IPR041731">
    <property type="entry name" value="NAGK-NC"/>
</dbReference>
<dbReference type="NCBIfam" id="TIGR00761">
    <property type="entry name" value="argB"/>
    <property type="match status" value="1"/>
</dbReference>
<dbReference type="PANTHER" id="PTHR23342">
    <property type="entry name" value="N-ACETYLGLUTAMATE SYNTHASE"/>
    <property type="match status" value="1"/>
</dbReference>
<dbReference type="PANTHER" id="PTHR23342:SF0">
    <property type="entry name" value="N-ACETYLGLUTAMATE SYNTHASE, MITOCHONDRIAL"/>
    <property type="match status" value="1"/>
</dbReference>
<dbReference type="Pfam" id="PF00696">
    <property type="entry name" value="AA_kinase"/>
    <property type="match status" value="1"/>
</dbReference>
<dbReference type="PIRSF" id="PIRSF000728">
    <property type="entry name" value="NAGK"/>
    <property type="match status" value="1"/>
</dbReference>
<dbReference type="SUPFAM" id="SSF53633">
    <property type="entry name" value="Carbamate kinase-like"/>
    <property type="match status" value="1"/>
</dbReference>
<organism>
    <name type="scientific">Shigella boydii serotype 4 (strain Sb227)</name>
    <dbReference type="NCBI Taxonomy" id="300268"/>
    <lineage>
        <taxon>Bacteria</taxon>
        <taxon>Pseudomonadati</taxon>
        <taxon>Pseudomonadota</taxon>
        <taxon>Gammaproteobacteria</taxon>
        <taxon>Enterobacterales</taxon>
        <taxon>Enterobacteriaceae</taxon>
        <taxon>Shigella</taxon>
    </lineage>
</organism>
<comment type="function">
    <text evidence="1">Catalyzes the ATP-dependent phosphorylation of N-acetyl-L-glutamate.</text>
</comment>
<comment type="catalytic activity">
    <reaction evidence="1">
        <text>N-acetyl-L-glutamate + ATP = N-acetyl-L-glutamyl 5-phosphate + ADP</text>
        <dbReference type="Rhea" id="RHEA:14629"/>
        <dbReference type="ChEBI" id="CHEBI:30616"/>
        <dbReference type="ChEBI" id="CHEBI:44337"/>
        <dbReference type="ChEBI" id="CHEBI:57936"/>
        <dbReference type="ChEBI" id="CHEBI:456216"/>
        <dbReference type="EC" id="2.7.2.8"/>
    </reaction>
</comment>
<comment type="pathway">
    <text evidence="1">Amino-acid biosynthesis; L-arginine biosynthesis; N(2)-acetyl-L-ornithine from L-glutamate: step 2/4.</text>
</comment>
<comment type="subunit">
    <text evidence="1">Homodimer.</text>
</comment>
<comment type="subcellular location">
    <subcellularLocation>
        <location evidence="1">Cytoplasm</location>
    </subcellularLocation>
</comment>
<comment type="similarity">
    <text evidence="1">Belongs to the acetylglutamate kinase family. ArgB subfamily.</text>
</comment>
<name>ARGB_SHIBS</name>
<keyword id="KW-0028">Amino-acid biosynthesis</keyword>
<keyword id="KW-0055">Arginine biosynthesis</keyword>
<keyword id="KW-0067">ATP-binding</keyword>
<keyword id="KW-0963">Cytoplasm</keyword>
<keyword id="KW-0418">Kinase</keyword>
<keyword id="KW-0547">Nucleotide-binding</keyword>
<keyword id="KW-0808">Transferase</keyword>
<sequence>MMNPLIIKLGGVLLDSEEALERLFSALVNYRESHQRPLVIVHGGGCVVDELMKGLNLPVKKKNGLRVTPADQIDIITGALAGTANKTLLAWAKKHQIAAVGLFLGDGDSVKVTQLDEELGHVGLAQPGSPKLINSLLENGYLPVVSSIGVTDEGQLMNVNADQAATALAATLGADLILLSDVSGILDGKGQRIAEMTAAKAEQLIEQGIITDGMIVKVNAALDAARTLGRPVDIASWRHAEQLPALFNGMPMGTRILA</sequence>
<evidence type="ECO:0000255" key="1">
    <source>
        <dbReference type="HAMAP-Rule" id="MF_00082"/>
    </source>
</evidence>
<reference key="1">
    <citation type="journal article" date="2005" name="Nucleic Acids Res.">
        <title>Genome dynamics and diversity of Shigella species, the etiologic agents of bacillary dysentery.</title>
        <authorList>
            <person name="Yang F."/>
            <person name="Yang J."/>
            <person name="Zhang X."/>
            <person name="Chen L."/>
            <person name="Jiang Y."/>
            <person name="Yan Y."/>
            <person name="Tang X."/>
            <person name="Wang J."/>
            <person name="Xiong Z."/>
            <person name="Dong J."/>
            <person name="Xue Y."/>
            <person name="Zhu Y."/>
            <person name="Xu X."/>
            <person name="Sun L."/>
            <person name="Chen S."/>
            <person name="Nie H."/>
            <person name="Peng J."/>
            <person name="Xu J."/>
            <person name="Wang Y."/>
            <person name="Yuan Z."/>
            <person name="Wen Y."/>
            <person name="Yao Z."/>
            <person name="Shen Y."/>
            <person name="Qiang B."/>
            <person name="Hou Y."/>
            <person name="Yu J."/>
            <person name="Jin Q."/>
        </authorList>
    </citation>
    <scope>NUCLEOTIDE SEQUENCE [LARGE SCALE GENOMIC DNA]</scope>
    <source>
        <strain>Sb227</strain>
    </source>
</reference>
<gene>
    <name evidence="1" type="primary">argB</name>
    <name type="ordered locus">SBO_3978</name>
</gene>
<proteinExistence type="inferred from homology"/>